<accession>P95993</accession>
<keyword id="KW-0002">3D-structure</keyword>
<keyword id="KW-1185">Reference proteome</keyword>
<keyword id="KW-0687">Ribonucleoprotein</keyword>
<keyword id="KW-0689">Ribosomal protein</keyword>
<comment type="similarity">
    <text evidence="2">Belongs to the universal ribosomal protein uS2 family.</text>
</comment>
<protein>
    <recommendedName>
        <fullName evidence="2">Small ribosomal subunit protein uS2</fullName>
    </recommendedName>
    <alternativeName>
        <fullName>30S ribosomal protein S2</fullName>
    </alternativeName>
</protein>
<reference key="1">
    <citation type="journal article" date="1996" name="Mol. Microbiol.">
        <title>Organizational characteristics and information content of an archaeal genome: 156 kb of sequence from Sulfolobus solfataricus P2.</title>
        <authorList>
            <person name="Sensen C.W."/>
            <person name="Klenk H.-P."/>
            <person name="Singh R.K."/>
            <person name="Allard G."/>
            <person name="Chan C.C.-Y."/>
            <person name="Liu Q.Y."/>
            <person name="Penny S.L."/>
            <person name="Young F."/>
            <person name="Schenk M.E."/>
            <person name="Gaasterland T."/>
            <person name="Doolittle W.F."/>
            <person name="Ragan M.A."/>
            <person name="Charlebois R.L."/>
        </authorList>
    </citation>
    <scope>NUCLEOTIDE SEQUENCE [GENOMIC DNA]</scope>
    <source>
        <strain>ATCC 35092 / DSM 1617 / JCM 11322 / P2</strain>
    </source>
</reference>
<reference key="2">
    <citation type="journal article" date="2001" name="Proc. Natl. Acad. Sci. U.S.A.">
        <title>The complete genome of the crenarchaeon Sulfolobus solfataricus P2.</title>
        <authorList>
            <person name="She Q."/>
            <person name="Singh R.K."/>
            <person name="Confalonieri F."/>
            <person name="Zivanovic Y."/>
            <person name="Allard G."/>
            <person name="Awayez M.J."/>
            <person name="Chan-Weiher C.C.-Y."/>
            <person name="Clausen I.G."/>
            <person name="Curtis B.A."/>
            <person name="De Moors A."/>
            <person name="Erauso G."/>
            <person name="Fletcher C."/>
            <person name="Gordon P.M.K."/>
            <person name="Heikamp-de Jong I."/>
            <person name="Jeffries A.C."/>
            <person name="Kozera C.J."/>
            <person name="Medina N."/>
            <person name="Peng X."/>
            <person name="Thi-Ngoc H.P."/>
            <person name="Redder P."/>
            <person name="Schenk M.E."/>
            <person name="Theriault C."/>
            <person name="Tolstrup N."/>
            <person name="Charlebois R.L."/>
            <person name="Doolittle W.F."/>
            <person name="Duguet M."/>
            <person name="Gaasterland T."/>
            <person name="Garrett R.A."/>
            <person name="Ragan M.A."/>
            <person name="Sensen C.W."/>
            <person name="Van der Oost J."/>
        </authorList>
    </citation>
    <scope>NUCLEOTIDE SEQUENCE [LARGE SCALE GENOMIC DNA]</scope>
    <source>
        <strain>ATCC 35092 / DSM 1617 / JCM 11322 / P2</strain>
    </source>
</reference>
<evidence type="ECO:0000256" key="1">
    <source>
        <dbReference type="SAM" id="MobiDB-lite"/>
    </source>
</evidence>
<evidence type="ECO:0000305" key="2"/>
<organism>
    <name type="scientific">Saccharolobus solfataricus (strain ATCC 35092 / DSM 1617 / JCM 11322 / P2)</name>
    <name type="common">Sulfolobus solfataricus</name>
    <dbReference type="NCBI Taxonomy" id="273057"/>
    <lineage>
        <taxon>Archaea</taxon>
        <taxon>Thermoproteota</taxon>
        <taxon>Thermoprotei</taxon>
        <taxon>Sulfolobales</taxon>
        <taxon>Sulfolobaceae</taxon>
        <taxon>Saccharolobus</taxon>
    </lineage>
</organism>
<sequence>MKVTNLSEKEERGGELTEAEKEELRKSEKGAIIELLVPVDTYLSAGVHIGTHSCTKYMESFVYRVRAEGLYVLDVRKIDERLRIAAKFLSRYDPQDIIVVASRPYAYRPVQKFAEVVGSRALVGRIIPGTFTNPYLSTYIEPKVLLVSDPRTDTQAIKEAAKVGIPIVAFADTDAKIDYIDLIIPANNKGRKSLALLYWALARQILRERRVIPPDGDLAVPVSEFEMRLVQ</sequence>
<name>RS2_SACS2</name>
<proteinExistence type="evidence at protein level"/>
<dbReference type="EMBL" id="Y08257">
    <property type="protein sequence ID" value="CAA69535.1"/>
    <property type="molecule type" value="Genomic_DNA"/>
</dbReference>
<dbReference type="EMBL" id="AE006641">
    <property type="protein sequence ID" value="AAK40428.1"/>
    <property type="molecule type" value="Genomic_DNA"/>
</dbReference>
<dbReference type="PIR" id="S75421">
    <property type="entry name" value="S75421"/>
</dbReference>
<dbReference type="PDB" id="9FHL">
    <property type="method" value="EM"/>
    <property type="resolution" value="2.50 A"/>
    <property type="chains" value="B=1-231"/>
</dbReference>
<dbReference type="PDB" id="9FRA">
    <property type="method" value="EM"/>
    <property type="resolution" value="2.80 A"/>
    <property type="chains" value="B=1-231"/>
</dbReference>
<dbReference type="PDB" id="9FRK">
    <property type="method" value="EM"/>
    <property type="resolution" value="3.00 A"/>
    <property type="chains" value="B=1-231"/>
</dbReference>
<dbReference type="PDB" id="9FRL">
    <property type="method" value="EM"/>
    <property type="resolution" value="2.97 A"/>
    <property type="chains" value="B=1-231"/>
</dbReference>
<dbReference type="PDB" id="9FS6">
    <property type="method" value="EM"/>
    <property type="resolution" value="2.90 A"/>
    <property type="chains" value="B=1-231"/>
</dbReference>
<dbReference type="PDB" id="9FS8">
    <property type="method" value="EM"/>
    <property type="resolution" value="3.70 A"/>
    <property type="chains" value="B=1-231"/>
</dbReference>
<dbReference type="PDB" id="9FSF">
    <property type="method" value="EM"/>
    <property type="resolution" value="2.80 A"/>
    <property type="chains" value="B=1-231"/>
</dbReference>
<dbReference type="PDB" id="9FY0">
    <property type="method" value="EM"/>
    <property type="resolution" value="2.90 A"/>
    <property type="chains" value="B=1-231"/>
</dbReference>
<dbReference type="PDBsum" id="9FHL"/>
<dbReference type="PDBsum" id="9FRA"/>
<dbReference type="PDBsum" id="9FRK"/>
<dbReference type="PDBsum" id="9FRL"/>
<dbReference type="PDBsum" id="9FS6"/>
<dbReference type="PDBsum" id="9FS8"/>
<dbReference type="PDBsum" id="9FSF"/>
<dbReference type="PDBsum" id="9FY0"/>
<dbReference type="EMDB" id="EMD-50445"/>
<dbReference type="EMDB" id="EMD-50709"/>
<dbReference type="EMDB" id="EMD-50716"/>
<dbReference type="EMDB" id="EMD-50717"/>
<dbReference type="EMDB" id="EMD-50724"/>
<dbReference type="EMDB" id="EMD-50725"/>
<dbReference type="EMDB" id="EMD-50727"/>
<dbReference type="EMDB" id="EMD-50854"/>
<dbReference type="SMR" id="P95993"/>
<dbReference type="FunCoup" id="P95993">
    <property type="interactions" value="168"/>
</dbReference>
<dbReference type="STRING" id="273057.SSO0067"/>
<dbReference type="PaxDb" id="273057-SSO0067"/>
<dbReference type="EnsemblBacteria" id="AAK40428">
    <property type="protein sequence ID" value="AAK40428"/>
    <property type="gene ID" value="SSO0067"/>
</dbReference>
<dbReference type="KEGG" id="sso:SSO0067"/>
<dbReference type="PATRIC" id="fig|273057.12.peg.67"/>
<dbReference type="eggNOG" id="arCOG04245">
    <property type="taxonomic scope" value="Archaea"/>
</dbReference>
<dbReference type="HOGENOM" id="CLU_058171_3_0_2"/>
<dbReference type="InParanoid" id="P95993"/>
<dbReference type="PhylomeDB" id="P95993"/>
<dbReference type="Proteomes" id="UP000001974">
    <property type="component" value="Chromosome"/>
</dbReference>
<dbReference type="GO" id="GO:0022627">
    <property type="term" value="C:cytosolic small ribosomal subunit"/>
    <property type="evidence" value="ECO:0000318"/>
    <property type="project" value="GO_Central"/>
</dbReference>
<dbReference type="GO" id="GO:0003735">
    <property type="term" value="F:structural constituent of ribosome"/>
    <property type="evidence" value="ECO:0000318"/>
    <property type="project" value="GO_Central"/>
</dbReference>
<dbReference type="GO" id="GO:0000028">
    <property type="term" value="P:ribosomal small subunit assembly"/>
    <property type="evidence" value="ECO:0000318"/>
    <property type="project" value="GO_Central"/>
</dbReference>
<dbReference type="GO" id="GO:0006412">
    <property type="term" value="P:translation"/>
    <property type="evidence" value="ECO:0000318"/>
    <property type="project" value="GO_Central"/>
</dbReference>
<dbReference type="CDD" id="cd01425">
    <property type="entry name" value="RPS2"/>
    <property type="match status" value="1"/>
</dbReference>
<dbReference type="FunFam" id="3.40.50.10490:FF:000030">
    <property type="entry name" value="30S ribosomal protein S2"/>
    <property type="match status" value="1"/>
</dbReference>
<dbReference type="Gene3D" id="3.40.50.10490">
    <property type="entry name" value="Glucose-6-phosphate isomerase like protein, domain 1"/>
    <property type="match status" value="1"/>
</dbReference>
<dbReference type="HAMAP" id="MF_00291_A">
    <property type="entry name" value="Ribosomal_uS2_A"/>
    <property type="match status" value="1"/>
</dbReference>
<dbReference type="InterPro" id="IPR001865">
    <property type="entry name" value="Ribosomal_uS2"/>
</dbReference>
<dbReference type="InterPro" id="IPR023454">
    <property type="entry name" value="Ribosomal_uS2_arc"/>
</dbReference>
<dbReference type="InterPro" id="IPR018130">
    <property type="entry name" value="Ribosomal_uS2_CS"/>
</dbReference>
<dbReference type="InterPro" id="IPR005707">
    <property type="entry name" value="Ribosomal_uS2_euk/arc"/>
</dbReference>
<dbReference type="InterPro" id="IPR023591">
    <property type="entry name" value="Ribosomal_uS2_flav_dom_sf"/>
</dbReference>
<dbReference type="NCBIfam" id="TIGR01012">
    <property type="entry name" value="uS2_euk_arch"/>
    <property type="match status" value="1"/>
</dbReference>
<dbReference type="PANTHER" id="PTHR11489">
    <property type="entry name" value="40S RIBOSOMAL PROTEIN SA"/>
    <property type="match status" value="1"/>
</dbReference>
<dbReference type="Pfam" id="PF00318">
    <property type="entry name" value="Ribosomal_S2"/>
    <property type="match status" value="2"/>
</dbReference>
<dbReference type="PRINTS" id="PR00395">
    <property type="entry name" value="RIBOSOMALS2"/>
</dbReference>
<dbReference type="SUPFAM" id="SSF52313">
    <property type="entry name" value="Ribosomal protein S2"/>
    <property type="match status" value="1"/>
</dbReference>
<dbReference type="PROSITE" id="PS00962">
    <property type="entry name" value="RIBOSOMAL_S2_1"/>
    <property type="match status" value="1"/>
</dbReference>
<dbReference type="PROSITE" id="PS00963">
    <property type="entry name" value="RIBOSOMAL_S2_2"/>
    <property type="match status" value="1"/>
</dbReference>
<gene>
    <name type="primary">rps2</name>
    <name type="synonym">rps2Ab</name>
    <name type="ordered locus">SSO0067</name>
    <name type="ORF">C05004</name>
    <name type="ORF">C05_043</name>
</gene>
<feature type="chain" id="PRO_0000134334" description="Small ribosomal subunit protein uS2">
    <location>
        <begin position="1"/>
        <end position="231"/>
    </location>
</feature>
<feature type="region of interest" description="Disordered" evidence="1">
    <location>
        <begin position="1"/>
        <end position="23"/>
    </location>
</feature>
<feature type="compositionally biased region" description="Basic and acidic residues" evidence="1">
    <location>
        <begin position="7"/>
        <end position="23"/>
    </location>
</feature>